<sequence>KQATCSIPYEYSNGKFKRTLYYSNGVYANS</sequence>
<name>HN728_CYRHA</name>
<protein>
    <recommendedName>
        <fullName>Hainantoxin F7-28.42</fullName>
    </recommendedName>
    <alternativeName>
        <fullName>Peptide F7-28.42</fullName>
    </alternativeName>
</protein>
<feature type="peptide" id="PRO_0000401057" description="Hainantoxin F7-28.42">
    <location>
        <begin position="1"/>
        <end position="30" status="greater than"/>
    </location>
</feature>
<feature type="non-terminal residue">
    <location>
        <position position="30"/>
    </location>
</feature>
<reference key="1">
    <citation type="journal article" date="2010" name="J. Proteome Res.">
        <title>Molecular diversification of peptide toxins from the tarantula Haplopelma hainanum (Ornithoctonus hainana) venom based on transcriptomic, peptidomic, and genomic analyses.</title>
        <authorList>
            <person name="Tang X."/>
            <person name="Zhang Y."/>
            <person name="Hu W."/>
            <person name="Xu D."/>
            <person name="Tao H."/>
            <person name="Yang X."/>
            <person name="Li Y."/>
            <person name="Jiang L."/>
            <person name="Liang S."/>
        </authorList>
    </citation>
    <scope>PROTEIN SEQUENCE</scope>
    <scope>IDENTIFICATION BY MASS SPECTROMETRY</scope>
    <source>
        <tissue>Venom</tissue>
    </source>
</reference>
<organism>
    <name type="scientific">Cyriopagopus hainanus</name>
    <name type="common">Chinese bird spider</name>
    <name type="synonym">Haplopelma hainanum</name>
    <dbReference type="NCBI Taxonomy" id="209901"/>
    <lineage>
        <taxon>Eukaryota</taxon>
        <taxon>Metazoa</taxon>
        <taxon>Ecdysozoa</taxon>
        <taxon>Arthropoda</taxon>
        <taxon>Chelicerata</taxon>
        <taxon>Arachnida</taxon>
        <taxon>Araneae</taxon>
        <taxon>Mygalomorphae</taxon>
        <taxon>Theraphosidae</taxon>
        <taxon>Haplopelma</taxon>
    </lineage>
</organism>
<proteinExistence type="evidence at protein level"/>
<keyword id="KW-0903">Direct protein sequencing</keyword>
<keyword id="KW-0964">Secreted</keyword>
<keyword id="KW-0800">Toxin</keyword>
<dbReference type="GO" id="GO:0005576">
    <property type="term" value="C:extracellular region"/>
    <property type="evidence" value="ECO:0007669"/>
    <property type="project" value="UniProtKB-SubCell"/>
</dbReference>
<dbReference type="GO" id="GO:0090729">
    <property type="term" value="F:toxin activity"/>
    <property type="evidence" value="ECO:0007669"/>
    <property type="project" value="UniProtKB-KW"/>
</dbReference>
<comment type="subcellular location">
    <subcellularLocation>
        <location>Secreted</location>
    </subcellularLocation>
</comment>
<comment type="tissue specificity">
    <text>Expressed by the venom gland.</text>
</comment>
<accession>P0CH76</accession>